<evidence type="ECO:0000250" key="1"/>
<evidence type="ECO:0000255" key="2">
    <source>
        <dbReference type="PROSITE-ProRule" id="PRU00541"/>
    </source>
</evidence>
<evidence type="ECO:0000255" key="3">
    <source>
        <dbReference type="PROSITE-ProRule" id="PRU00542"/>
    </source>
</evidence>
<evidence type="ECO:0000256" key="4">
    <source>
        <dbReference type="SAM" id="MobiDB-lite"/>
    </source>
</evidence>
<evidence type="ECO:0000269" key="5">
    <source>
    </source>
</evidence>
<evidence type="ECO:0000269" key="6">
    <source>
    </source>
</evidence>
<evidence type="ECO:0000305" key="7"/>
<gene>
    <name type="primary">fft2</name>
    <name type="ORF">SPCC1235.05c</name>
</gene>
<dbReference type="EC" id="3.6.4.12"/>
<dbReference type="EMBL" id="CU329672">
    <property type="protein sequence ID" value="CAA21109.1"/>
    <property type="molecule type" value="Genomic_DNA"/>
</dbReference>
<dbReference type="PIR" id="T40879">
    <property type="entry name" value="T40879"/>
</dbReference>
<dbReference type="RefSeq" id="NP_587731.1">
    <property type="nucleotide sequence ID" value="NM_001022726.2"/>
</dbReference>
<dbReference type="SMR" id="O74842"/>
<dbReference type="BioGRID" id="275618">
    <property type="interactions" value="32"/>
</dbReference>
<dbReference type="FunCoup" id="O74842">
    <property type="interactions" value="1143"/>
</dbReference>
<dbReference type="STRING" id="284812.O74842"/>
<dbReference type="iPTMnet" id="O74842"/>
<dbReference type="PaxDb" id="4896-SPCC1235.05c.1"/>
<dbReference type="EnsemblFungi" id="SPCC1235.05c.1">
    <property type="protein sequence ID" value="SPCC1235.05c.1:pep"/>
    <property type="gene ID" value="SPCC1235.05c"/>
</dbReference>
<dbReference type="GeneID" id="2539045"/>
<dbReference type="KEGG" id="spo:2539045"/>
<dbReference type="PomBase" id="SPCC1235.05c">
    <property type="gene designation" value="fft2"/>
</dbReference>
<dbReference type="VEuPathDB" id="FungiDB:SPCC1235.05c"/>
<dbReference type="eggNOG" id="KOG0389">
    <property type="taxonomic scope" value="Eukaryota"/>
</dbReference>
<dbReference type="HOGENOM" id="CLU_000315_16_5_1"/>
<dbReference type="InParanoid" id="O74842"/>
<dbReference type="OMA" id="CMETMEG"/>
<dbReference type="PhylomeDB" id="O74842"/>
<dbReference type="PRO" id="PR:O74842"/>
<dbReference type="Proteomes" id="UP000002485">
    <property type="component" value="Chromosome III"/>
</dbReference>
<dbReference type="GO" id="GO:0000785">
    <property type="term" value="C:chromatin"/>
    <property type="evidence" value="ECO:0000318"/>
    <property type="project" value="GO_Central"/>
</dbReference>
<dbReference type="GO" id="GO:0005829">
    <property type="term" value="C:cytosol"/>
    <property type="evidence" value="ECO:0007005"/>
    <property type="project" value="PomBase"/>
</dbReference>
<dbReference type="GO" id="GO:0005634">
    <property type="term" value="C:nucleus"/>
    <property type="evidence" value="ECO:0007005"/>
    <property type="project" value="PomBase"/>
</dbReference>
<dbReference type="GO" id="GO:0005524">
    <property type="term" value="F:ATP binding"/>
    <property type="evidence" value="ECO:0000255"/>
    <property type="project" value="PomBase"/>
</dbReference>
<dbReference type="GO" id="GO:0016887">
    <property type="term" value="F:ATP hydrolysis activity"/>
    <property type="evidence" value="ECO:0007669"/>
    <property type="project" value="RHEA"/>
</dbReference>
<dbReference type="GO" id="GO:0003682">
    <property type="term" value="F:chromatin binding"/>
    <property type="evidence" value="ECO:0000318"/>
    <property type="project" value="GO_Central"/>
</dbReference>
<dbReference type="GO" id="GO:0003677">
    <property type="term" value="F:DNA binding"/>
    <property type="evidence" value="ECO:0000318"/>
    <property type="project" value="GO_Central"/>
</dbReference>
<dbReference type="GO" id="GO:0004386">
    <property type="term" value="F:helicase activity"/>
    <property type="evidence" value="ECO:0007669"/>
    <property type="project" value="UniProtKB-KW"/>
</dbReference>
<dbReference type="GO" id="GO:0140750">
    <property type="term" value="F:nucleosome array spacer activity"/>
    <property type="evidence" value="ECO:0000318"/>
    <property type="project" value="GO_Central"/>
</dbReference>
<dbReference type="GO" id="GO:0000729">
    <property type="term" value="P:DNA double-strand break processing"/>
    <property type="evidence" value="ECO:0000318"/>
    <property type="project" value="GO_Central"/>
</dbReference>
<dbReference type="GO" id="GO:0045944">
    <property type="term" value="P:positive regulation of transcription by RNA polymerase II"/>
    <property type="evidence" value="ECO:0000318"/>
    <property type="project" value="GO_Central"/>
</dbReference>
<dbReference type="CDD" id="cd17998">
    <property type="entry name" value="DEXHc_SMARCAD1"/>
    <property type="match status" value="1"/>
</dbReference>
<dbReference type="CDD" id="cd18793">
    <property type="entry name" value="SF2_C_SNF"/>
    <property type="match status" value="1"/>
</dbReference>
<dbReference type="FunFam" id="3.40.50.300:FF:003518">
    <property type="entry name" value="ATP-dependent helicase fft1"/>
    <property type="match status" value="1"/>
</dbReference>
<dbReference type="FunFam" id="3.40.50.10810:FF:000014">
    <property type="entry name" value="SWI/SNF-related matrix-associated actin-dependent regulator of chromatin subfamily A containing DEAD/H box 1"/>
    <property type="match status" value="1"/>
</dbReference>
<dbReference type="Gene3D" id="3.40.50.300">
    <property type="entry name" value="P-loop containing nucleotide triphosphate hydrolases"/>
    <property type="match status" value="1"/>
</dbReference>
<dbReference type="Gene3D" id="3.40.50.10810">
    <property type="entry name" value="Tandem AAA-ATPase domain"/>
    <property type="match status" value="1"/>
</dbReference>
<dbReference type="InterPro" id="IPR014001">
    <property type="entry name" value="Helicase_ATP-bd"/>
</dbReference>
<dbReference type="InterPro" id="IPR001650">
    <property type="entry name" value="Helicase_C-like"/>
</dbReference>
<dbReference type="InterPro" id="IPR027417">
    <property type="entry name" value="P-loop_NTPase"/>
</dbReference>
<dbReference type="InterPro" id="IPR038718">
    <property type="entry name" value="SNF2-like_sf"/>
</dbReference>
<dbReference type="InterPro" id="IPR049730">
    <property type="entry name" value="SNF2/RAD54-like_C"/>
</dbReference>
<dbReference type="InterPro" id="IPR000330">
    <property type="entry name" value="SNF2_N"/>
</dbReference>
<dbReference type="PANTHER" id="PTHR10799">
    <property type="entry name" value="SNF2/RAD54 HELICASE FAMILY"/>
    <property type="match status" value="1"/>
</dbReference>
<dbReference type="Pfam" id="PF00271">
    <property type="entry name" value="Helicase_C"/>
    <property type="match status" value="1"/>
</dbReference>
<dbReference type="Pfam" id="PF00176">
    <property type="entry name" value="SNF2-rel_dom"/>
    <property type="match status" value="1"/>
</dbReference>
<dbReference type="SMART" id="SM00487">
    <property type="entry name" value="DEXDc"/>
    <property type="match status" value="1"/>
</dbReference>
<dbReference type="SMART" id="SM00490">
    <property type="entry name" value="HELICc"/>
    <property type="match status" value="1"/>
</dbReference>
<dbReference type="SUPFAM" id="SSF52540">
    <property type="entry name" value="P-loop containing nucleoside triphosphate hydrolases"/>
    <property type="match status" value="2"/>
</dbReference>
<dbReference type="PROSITE" id="PS51192">
    <property type="entry name" value="HELICASE_ATP_BIND_1"/>
    <property type="match status" value="1"/>
</dbReference>
<dbReference type="PROSITE" id="PS51194">
    <property type="entry name" value="HELICASE_CTER"/>
    <property type="match status" value="1"/>
</dbReference>
<accession>O74842</accession>
<organism>
    <name type="scientific">Schizosaccharomyces pombe (strain 972 / ATCC 24843)</name>
    <name type="common">Fission yeast</name>
    <dbReference type="NCBI Taxonomy" id="284812"/>
    <lineage>
        <taxon>Eukaryota</taxon>
        <taxon>Fungi</taxon>
        <taxon>Dikarya</taxon>
        <taxon>Ascomycota</taxon>
        <taxon>Taphrinomycotina</taxon>
        <taxon>Schizosaccharomycetes</taxon>
        <taxon>Schizosaccharomycetales</taxon>
        <taxon>Schizosaccharomycetaceae</taxon>
        <taxon>Schizosaccharomyces</taxon>
    </lineage>
</organism>
<keyword id="KW-0067">ATP-binding</keyword>
<keyword id="KW-0156">Chromatin regulator</keyword>
<keyword id="KW-0963">Cytoplasm</keyword>
<keyword id="KW-0238">DNA-binding</keyword>
<keyword id="KW-0347">Helicase</keyword>
<keyword id="KW-0378">Hydrolase</keyword>
<keyword id="KW-0547">Nucleotide-binding</keyword>
<keyword id="KW-0539">Nucleus</keyword>
<keyword id="KW-0597">Phosphoprotein</keyword>
<keyword id="KW-1185">Reference proteome</keyword>
<protein>
    <recommendedName>
        <fullName>ATP-dependent helicase fft2</fullName>
        <ecNumber>3.6.4.12</ecNumber>
    </recommendedName>
    <alternativeName>
        <fullName>Fun thirty-related protein 2</fullName>
    </alternativeName>
</protein>
<comment type="function">
    <text evidence="1">DNA helicase that possesses intrinsic ATP-dependent nucleosome-remodeling activity and is required for heterochromatin organization.</text>
</comment>
<comment type="catalytic activity">
    <reaction>
        <text>ATP + H2O = ADP + phosphate + H(+)</text>
        <dbReference type="Rhea" id="RHEA:13065"/>
        <dbReference type="ChEBI" id="CHEBI:15377"/>
        <dbReference type="ChEBI" id="CHEBI:15378"/>
        <dbReference type="ChEBI" id="CHEBI:30616"/>
        <dbReference type="ChEBI" id="CHEBI:43474"/>
        <dbReference type="ChEBI" id="CHEBI:456216"/>
        <dbReference type="EC" id="3.6.4.12"/>
    </reaction>
</comment>
<comment type="subcellular location">
    <subcellularLocation>
        <location evidence="5">Cytoplasm</location>
    </subcellularLocation>
    <subcellularLocation>
        <location evidence="5">Nucleus</location>
    </subcellularLocation>
</comment>
<comment type="similarity">
    <text evidence="7">Belongs to the SNF2/RAD54 helicase family.</text>
</comment>
<sequence length="1284" mass="143667">MLPYNSNYLSDNGKRKFSDENPQSEVYGSSQTGLPSSYGNPQSYGTPPVQQSSAMYGVNNSMGGGMYNTSENTQFMNTDYSQTSSYASTPMSNAYSRDAPAAINNNFGYSYVGQSSQPVPSYNPLPSYNTASLPNAGIPAAMPGMPSGYPGTVPIPQGGYNAHYSSPYNNGYPIGAVNPTSAIPAQPPAQPVNNVLPSYVRSNSRSSARSTARSAPRSTQRSRSSSANPVTTPPVNNTLLTPPAPPVELPPVTTTSPNAIIRSVQWIRSFVPQAPIHQVINTLAQTKWDETAALSILSQKYLSCDLGIPIQEHKRFKQSPVASNMPTYGSSNRTVQSQKRSIRDKYIQMPNDSTQASLMPSYTRKTSNASKKLTTEEDEFYDSEEEPEAIVHRDTSALERTVLNFINSSTAKELSDTASCPLSHSKLLLEHRPFQTLAEACIIKHPDDVPSKPGRRGRRREKNPMGQKIVNACMETMEGYYAIDNLIAKCEFLGNRISKGMASWGIKLEMSNGELNIVDMESVPTEAADNSDFPKFVTEQPKTLASDVQLKSYQLVGVNWLHLLYQQKLSGILADEMGLGKTCQVVAFFALLLEQGHHGPHLVVVPSSTLENWLRELARFCPSLRVEPYYGSQQERANIREAIEENEIKYDILVTTYQLATNNKEDRSFLKHQNFDVCVYDEGHYLKNRMSERYKHLMNLNANFRLLLTGTPLQNNLKELVSLLAFILPNMFDSDMDDLDVIFKAKPTADADIEQALLSKQRISRAKTMMTPFVLRRRKNQVLNDLPKKTQIIEHCKLSENQLEIYNRYAALQKNQQLRRDDKRNKRSKNDEESDGKSLSAGHVLMQLRKAANHALLFRKFYDDEKLKQMAKDIMQEEQYKNANEQYIYEDMEVMSDFELHRLCRSFPTLQSYTLKDDPWMDSGKIRVLKELLPKMKEEGSRILLFSQFTQMLDILEQVLDTLKISYVRLDGSTQVEVRQDIIDQFHKEEDVTVFLLSTKAGGFGINLACANVVILYDCSYNPFDDLQAEDRAHRVGQVREVTVIRLITDNTIEEYIQKLANTKLALDMSLSSDGKDREEIGERLVQDMLDEENNGNNTKPEITGNESDGEFKVSSSNNSKQTDAEETNTGVPLEGSQPNSVEKTDLADGDEKANIKTEMKSETVEGDNKELRETMKGENVQTDSNAAVPSSKSSTEEPNESVLSGHLDLDTEASPVVSTIEKTTKGDVSVTEEQQSANIDGQLEKPEIEESKKPDVLNQVSLSIEEEKPKNKESEVDNNAAKD</sequence>
<proteinExistence type="evidence at protein level"/>
<feature type="chain" id="PRO_0000310748" description="ATP-dependent helicase fft2">
    <location>
        <begin position="1"/>
        <end position="1284"/>
    </location>
</feature>
<feature type="domain" description="Helicase ATP-binding" evidence="2">
    <location>
        <begin position="562"/>
        <end position="730"/>
    </location>
</feature>
<feature type="domain" description="Helicase C-terminal" evidence="3">
    <location>
        <begin position="928"/>
        <end position="1079"/>
    </location>
</feature>
<feature type="region of interest" description="Disordered" evidence="4">
    <location>
        <begin position="1"/>
        <end position="57"/>
    </location>
</feature>
<feature type="region of interest" description="Disordered" evidence="4">
    <location>
        <begin position="185"/>
        <end position="252"/>
    </location>
</feature>
<feature type="region of interest" description="Disordered" evidence="4">
    <location>
        <begin position="317"/>
        <end position="339"/>
    </location>
</feature>
<feature type="region of interest" description="Disordered" evidence="4">
    <location>
        <begin position="353"/>
        <end position="388"/>
    </location>
</feature>
<feature type="region of interest" description="Disordered" evidence="4">
    <location>
        <begin position="446"/>
        <end position="465"/>
    </location>
</feature>
<feature type="region of interest" description="Disordered" evidence="4">
    <location>
        <begin position="816"/>
        <end position="839"/>
    </location>
</feature>
<feature type="region of interest" description="Disordered" evidence="4">
    <location>
        <begin position="1088"/>
        <end position="1284"/>
    </location>
</feature>
<feature type="short sequence motif" description="DEGH box">
    <location>
        <begin position="681"/>
        <end position="684"/>
    </location>
</feature>
<feature type="compositionally biased region" description="Polar residues" evidence="4">
    <location>
        <begin position="1"/>
        <end position="10"/>
    </location>
</feature>
<feature type="compositionally biased region" description="Polar residues" evidence="4">
    <location>
        <begin position="20"/>
        <end position="57"/>
    </location>
</feature>
<feature type="compositionally biased region" description="Low complexity" evidence="4">
    <location>
        <begin position="201"/>
        <end position="241"/>
    </location>
</feature>
<feature type="compositionally biased region" description="Polar residues" evidence="4">
    <location>
        <begin position="320"/>
        <end position="339"/>
    </location>
</feature>
<feature type="compositionally biased region" description="Polar residues" evidence="4">
    <location>
        <begin position="353"/>
        <end position="372"/>
    </location>
</feature>
<feature type="compositionally biased region" description="Acidic residues" evidence="4">
    <location>
        <begin position="376"/>
        <end position="388"/>
    </location>
</feature>
<feature type="compositionally biased region" description="Basic and acidic residues" evidence="4">
    <location>
        <begin position="818"/>
        <end position="831"/>
    </location>
</feature>
<feature type="compositionally biased region" description="Polar residues" evidence="4">
    <location>
        <begin position="1095"/>
        <end position="1107"/>
    </location>
</feature>
<feature type="compositionally biased region" description="Basic and acidic residues" evidence="4">
    <location>
        <begin position="1143"/>
        <end position="1177"/>
    </location>
</feature>
<feature type="compositionally biased region" description="Polar residues" evidence="4">
    <location>
        <begin position="1180"/>
        <end position="1194"/>
    </location>
</feature>
<feature type="compositionally biased region" description="Basic and acidic residues" evidence="4">
    <location>
        <begin position="1243"/>
        <end position="1256"/>
    </location>
</feature>
<feature type="compositionally biased region" description="Basic and acidic residues" evidence="4">
    <location>
        <begin position="1266"/>
        <end position="1284"/>
    </location>
</feature>
<feature type="binding site" evidence="2">
    <location>
        <begin position="575"/>
        <end position="582"/>
    </location>
    <ligand>
        <name>ATP</name>
        <dbReference type="ChEBI" id="CHEBI:30616"/>
    </ligand>
</feature>
<feature type="modified residue" description="Phosphoserine" evidence="6">
    <location>
        <position position="323"/>
    </location>
</feature>
<feature type="modified residue" description="Phosphoserine" evidence="6">
    <location>
        <position position="383"/>
    </location>
</feature>
<name>FFT2_SCHPO</name>
<reference key="1">
    <citation type="journal article" date="2002" name="Nature">
        <title>The genome sequence of Schizosaccharomyces pombe.</title>
        <authorList>
            <person name="Wood V."/>
            <person name="Gwilliam R."/>
            <person name="Rajandream M.A."/>
            <person name="Lyne M.H."/>
            <person name="Lyne R."/>
            <person name="Stewart A."/>
            <person name="Sgouros J.G."/>
            <person name="Peat N."/>
            <person name="Hayles J."/>
            <person name="Baker S.G."/>
            <person name="Basham D."/>
            <person name="Bowman S."/>
            <person name="Brooks K."/>
            <person name="Brown D."/>
            <person name="Brown S."/>
            <person name="Chillingworth T."/>
            <person name="Churcher C.M."/>
            <person name="Collins M."/>
            <person name="Connor R."/>
            <person name="Cronin A."/>
            <person name="Davis P."/>
            <person name="Feltwell T."/>
            <person name="Fraser A."/>
            <person name="Gentles S."/>
            <person name="Goble A."/>
            <person name="Hamlin N."/>
            <person name="Harris D.E."/>
            <person name="Hidalgo J."/>
            <person name="Hodgson G."/>
            <person name="Holroyd S."/>
            <person name="Hornsby T."/>
            <person name="Howarth S."/>
            <person name="Huckle E.J."/>
            <person name="Hunt S."/>
            <person name="Jagels K."/>
            <person name="James K.D."/>
            <person name="Jones L."/>
            <person name="Jones M."/>
            <person name="Leather S."/>
            <person name="McDonald S."/>
            <person name="McLean J."/>
            <person name="Mooney P."/>
            <person name="Moule S."/>
            <person name="Mungall K.L."/>
            <person name="Murphy L.D."/>
            <person name="Niblett D."/>
            <person name="Odell C."/>
            <person name="Oliver K."/>
            <person name="O'Neil S."/>
            <person name="Pearson D."/>
            <person name="Quail M.A."/>
            <person name="Rabbinowitsch E."/>
            <person name="Rutherford K.M."/>
            <person name="Rutter S."/>
            <person name="Saunders D."/>
            <person name="Seeger K."/>
            <person name="Sharp S."/>
            <person name="Skelton J."/>
            <person name="Simmonds M.N."/>
            <person name="Squares R."/>
            <person name="Squares S."/>
            <person name="Stevens K."/>
            <person name="Taylor K."/>
            <person name="Taylor R.G."/>
            <person name="Tivey A."/>
            <person name="Walsh S.V."/>
            <person name="Warren T."/>
            <person name="Whitehead S."/>
            <person name="Woodward J.R."/>
            <person name="Volckaert G."/>
            <person name="Aert R."/>
            <person name="Robben J."/>
            <person name="Grymonprez B."/>
            <person name="Weltjens I."/>
            <person name="Vanstreels E."/>
            <person name="Rieger M."/>
            <person name="Schaefer M."/>
            <person name="Mueller-Auer S."/>
            <person name="Gabel C."/>
            <person name="Fuchs M."/>
            <person name="Duesterhoeft A."/>
            <person name="Fritzc C."/>
            <person name="Holzer E."/>
            <person name="Moestl D."/>
            <person name="Hilbert H."/>
            <person name="Borzym K."/>
            <person name="Langer I."/>
            <person name="Beck A."/>
            <person name="Lehrach H."/>
            <person name="Reinhardt R."/>
            <person name="Pohl T.M."/>
            <person name="Eger P."/>
            <person name="Zimmermann W."/>
            <person name="Wedler H."/>
            <person name="Wambutt R."/>
            <person name="Purnelle B."/>
            <person name="Goffeau A."/>
            <person name="Cadieu E."/>
            <person name="Dreano S."/>
            <person name="Gloux S."/>
            <person name="Lelaure V."/>
            <person name="Mottier S."/>
            <person name="Galibert F."/>
            <person name="Aves S.J."/>
            <person name="Xiang Z."/>
            <person name="Hunt C."/>
            <person name="Moore K."/>
            <person name="Hurst S.M."/>
            <person name="Lucas M."/>
            <person name="Rochet M."/>
            <person name="Gaillardin C."/>
            <person name="Tallada V.A."/>
            <person name="Garzon A."/>
            <person name="Thode G."/>
            <person name="Daga R.R."/>
            <person name="Cruzado L."/>
            <person name="Jimenez J."/>
            <person name="Sanchez M."/>
            <person name="del Rey F."/>
            <person name="Benito J."/>
            <person name="Dominguez A."/>
            <person name="Revuelta J.L."/>
            <person name="Moreno S."/>
            <person name="Armstrong J."/>
            <person name="Forsburg S.L."/>
            <person name="Cerutti L."/>
            <person name="Lowe T."/>
            <person name="McCombie W.R."/>
            <person name="Paulsen I."/>
            <person name="Potashkin J."/>
            <person name="Shpakovski G.V."/>
            <person name="Ussery D."/>
            <person name="Barrell B.G."/>
            <person name="Nurse P."/>
        </authorList>
    </citation>
    <scope>NUCLEOTIDE SEQUENCE [LARGE SCALE GENOMIC DNA]</scope>
    <source>
        <strain>972 / ATCC 24843</strain>
    </source>
</reference>
<reference key="2">
    <citation type="journal article" date="2006" name="Nat. Biotechnol.">
        <title>ORFeome cloning and global analysis of protein localization in the fission yeast Schizosaccharomyces pombe.</title>
        <authorList>
            <person name="Matsuyama A."/>
            <person name="Arai R."/>
            <person name="Yashiroda Y."/>
            <person name="Shirai A."/>
            <person name="Kamata A."/>
            <person name="Sekido S."/>
            <person name="Kobayashi Y."/>
            <person name="Hashimoto A."/>
            <person name="Hamamoto M."/>
            <person name="Hiraoka Y."/>
            <person name="Horinouchi S."/>
            <person name="Yoshida M."/>
        </authorList>
    </citation>
    <scope>SUBCELLULAR LOCATION [LARGE SCALE ANALYSIS]</scope>
</reference>
<reference key="3">
    <citation type="journal article" date="2008" name="J. Proteome Res.">
        <title>Phosphoproteome analysis of fission yeast.</title>
        <authorList>
            <person name="Wilson-Grady J.T."/>
            <person name="Villen J."/>
            <person name="Gygi S.P."/>
        </authorList>
    </citation>
    <scope>PHOSPHORYLATION [LARGE SCALE ANALYSIS] AT SER-323 AND SER-383</scope>
    <scope>IDENTIFICATION BY MASS SPECTROMETRY</scope>
</reference>